<accession>A0A084B9Z4</accession>
<keyword id="KW-0378">Hydrolase</keyword>
<feature type="chain" id="PRO_0000442415" description="Probable trichothecene esterase SAT6">
    <location>
        <begin position="1"/>
        <end position="485"/>
    </location>
</feature>
<feature type="region of interest" description="Disordered" evidence="2">
    <location>
        <begin position="1"/>
        <end position="23"/>
    </location>
</feature>
<feature type="compositionally biased region" description="Low complexity" evidence="2">
    <location>
        <begin position="9"/>
        <end position="23"/>
    </location>
</feature>
<feature type="active site" description="Charge relay system" evidence="1">
    <location>
        <position position="262"/>
    </location>
</feature>
<feature type="active site" description="Charge relay system" evidence="1">
    <location>
        <position position="406"/>
    </location>
</feature>
<feature type="active site" description="Charge relay system" evidence="1">
    <location>
        <position position="438"/>
    </location>
</feature>
<proteinExistence type="inferred from homology"/>
<sequence>MPQDPNTTLQMSSSKPSLSDLSVSADPVLGKADNQVRDSLALPSIEGGEEGVMRPLAWLFGLCAIQQASGATLLRNDVSTVEPLPPTQDPWYRAPPGFEKKQPGDVLRIRQAPGNLTTVVSNSSAAFHILFRTTNARSEPAWAVTTLFLPKKLYRAPSRNAALLSFQLADNSANPDSAPSLGLYWRLAQDNPMLGLRSDTSFISNLLSEGWLVNIPDQSGPEAAFGASRQAGHATIDAIRAIQHLCSLTGATGINAAIWGYSGGTFATGAAAELMPTYAPNINIVGAVLGGMVTDVSGGFDSLNRSPIAATIIATLLGVTAQFPEERAYLESRLVPETRDEFMSVLDINVFDALVHFAGRDIYAFFIDGAADIEAPILQNLFEAQSRIGFGDIPPMPMFIYKAIADEVVPIGPTDVTVQRWCDGGADITYERNTVGGHIAEIENGKPRAIQWLWSIFDESYSAQSPECRIRDVTVEVPVQVVGRV</sequence>
<protein>
    <recommendedName>
        <fullName evidence="4">Probable trichothecene esterase SAT6</fullName>
        <ecNumber evidence="6">3.1.1.-</ecNumber>
    </recommendedName>
    <alternativeName>
        <fullName evidence="4">Satratoxin biosynthesis SC1 cluster protein 6</fullName>
    </alternativeName>
</protein>
<evidence type="ECO:0000250" key="1">
    <source>
        <dbReference type="UniProtKB" id="W3VKA4"/>
    </source>
</evidence>
<evidence type="ECO:0000256" key="2">
    <source>
        <dbReference type="SAM" id="MobiDB-lite"/>
    </source>
</evidence>
<evidence type="ECO:0000269" key="3">
    <source>
    </source>
</evidence>
<evidence type="ECO:0000303" key="4">
    <source>
    </source>
</evidence>
<evidence type="ECO:0000305" key="5"/>
<evidence type="ECO:0000305" key="6">
    <source>
    </source>
</evidence>
<reference key="1">
    <citation type="journal article" date="2014" name="BMC Genomics">
        <title>Comparative genome sequencing reveals chemotype-specific gene clusters in the toxigenic black mold Stachybotrys.</title>
        <authorList>
            <person name="Semeiks J."/>
            <person name="Borek D."/>
            <person name="Otwinowski Z."/>
            <person name="Grishin N.V."/>
        </authorList>
    </citation>
    <scope>NUCLEOTIDE SEQUENCE [LARGE SCALE GENOMIC DNA]</scope>
    <scope>IDENTIFICATION</scope>
    <scope>FUNCTION</scope>
    <source>
        <strain>CBS 109288 / IBT 7711</strain>
    </source>
</reference>
<organism>
    <name type="scientific">Stachybotrys chartarum (strain CBS 109288 / IBT 7711)</name>
    <name type="common">Toxic black mold</name>
    <name type="synonym">Stilbospora chartarum</name>
    <dbReference type="NCBI Taxonomy" id="1280523"/>
    <lineage>
        <taxon>Eukaryota</taxon>
        <taxon>Fungi</taxon>
        <taxon>Dikarya</taxon>
        <taxon>Ascomycota</taxon>
        <taxon>Pezizomycotina</taxon>
        <taxon>Sordariomycetes</taxon>
        <taxon>Hypocreomycetidae</taxon>
        <taxon>Hypocreales</taxon>
        <taxon>Stachybotryaceae</taxon>
        <taxon>Stachybotrys</taxon>
    </lineage>
</organism>
<gene>
    <name evidence="4" type="primary">SAT6</name>
    <name type="ORF">S7711_07280</name>
</gene>
<comment type="function">
    <text evidence="6">Probable trichothecene esterase; part of the satratoxin SC1 cluster involved in the biosynthesis of satratoxins, trichothecene mycotoxins that are associated with human food poisonings (PubMed:25015739). Satratoxins are suggested to be made by products of multiple gene clusters (SC1, SC2 and SC3) that encode 21 proteins in all, including polyketide synthases, acetyltransferases, and other enzymes expected to modify the trichothecene skeleton (PubMed:25015739). SC1 encodes 10 proteins, SAT1 to SAT10 (PubMed:25015739). The largest are SAT8, which encodes a putative polyketide synthase (PKS) with a conventional non-reducing architecture, and SAT10, a putative protein containing four ankyrin repeats and thus may be involved in protein scaffolding (PubMed:25015739). The putative short-chain reductase SAT3 may assist the PKS in some capacity (PubMed:25015739). SAT6 contains a secretory lipase domain and acts probably as a trichothecene esterase (PubMed:25015739). SAT5 encodes a putative acetyltransferase, and so, with SAT6, may affect endogenous protection from toxicity (PubMed:25015739). The probable transcription factor SAT9 may regulate the expression of the SC1 cluster (PubMed:25015739). SC2 encodes proteins SAT11 to SAT16, the largest of which encodes the putative reducing PKS SAT13 (PubMed:25015739). SAT11 is a cytochrome P450 monooxygenase, while SAT14 and SAT16 are probable acetyltransferases (PubMed:25015739). The SC2 cluster may be regulated by the transcription factor SAT15 (PubMed:25015739). SC3 is a small cluster that encodes 5 proteins, SAT17 to SAT21 (PubMed:25015739). SAT21 is a putative MFS-type transporter which may have a role in exporting secondary metabolites (PubMed:25015739). The four other proteins putatively encoded in SC3 include the taurine hydroxylase-like protein SAT17, the O-methyltransferase SAT18, the acetyltransferase SAT19, and the Cys6-type zinc finger SAT20, the latter being probably involved in regulation of SC3 expression (PubMed:25015739).</text>
</comment>
<comment type="pathway">
    <text evidence="3">Mycotoxin biosynthesis.</text>
</comment>
<comment type="miscellaneous">
    <text evidence="5">Trichothecenes are sesquiterpenoid toxins that act by inhibiting protein biosynthesis.</text>
</comment>
<comment type="similarity">
    <text evidence="5">Belongs to the AB hydrolase superfamily. Lipase family.</text>
</comment>
<dbReference type="EC" id="3.1.1.-" evidence="6"/>
<dbReference type="EMBL" id="KL647604">
    <property type="protein sequence ID" value="KEY74373.1"/>
    <property type="molecule type" value="Genomic_DNA"/>
</dbReference>
<dbReference type="SMR" id="A0A084B9Z4"/>
<dbReference type="ESTHER" id="stacb-sat6">
    <property type="family name" value="Fungal-Bact_LIP"/>
</dbReference>
<dbReference type="HOGENOM" id="CLU_029538_5_0_1"/>
<dbReference type="OrthoDB" id="269052at5125"/>
<dbReference type="Proteomes" id="UP000028045">
    <property type="component" value="Unassembled WGS sequence"/>
</dbReference>
<dbReference type="GO" id="GO:0004806">
    <property type="term" value="F:triacylglycerol lipase activity"/>
    <property type="evidence" value="ECO:0007669"/>
    <property type="project" value="InterPro"/>
</dbReference>
<dbReference type="GO" id="GO:0016042">
    <property type="term" value="P:lipid catabolic process"/>
    <property type="evidence" value="ECO:0007669"/>
    <property type="project" value="InterPro"/>
</dbReference>
<dbReference type="Gene3D" id="1.10.260.130">
    <property type="match status" value="1"/>
</dbReference>
<dbReference type="Gene3D" id="3.40.50.1820">
    <property type="entry name" value="alpha/beta hydrolase"/>
    <property type="match status" value="1"/>
</dbReference>
<dbReference type="InterPro" id="IPR029058">
    <property type="entry name" value="AB_hydrolase_fold"/>
</dbReference>
<dbReference type="InterPro" id="IPR005152">
    <property type="entry name" value="Lipase_secreted"/>
</dbReference>
<dbReference type="PANTHER" id="PTHR34853">
    <property type="match status" value="1"/>
</dbReference>
<dbReference type="PANTHER" id="PTHR34853:SF5">
    <property type="entry name" value="LIP-DOMAIN-CONTAINING PROTEIN-RELATED"/>
    <property type="match status" value="1"/>
</dbReference>
<dbReference type="Pfam" id="PF03583">
    <property type="entry name" value="LIP"/>
    <property type="match status" value="1"/>
</dbReference>
<dbReference type="SUPFAM" id="SSF53474">
    <property type="entry name" value="alpha/beta-Hydrolases"/>
    <property type="match status" value="1"/>
</dbReference>
<name>SAT6_STACB</name>